<feature type="chain" id="PRO_0000175170" description="Ferrochelatase">
    <location>
        <begin position="1"/>
        <end position="336"/>
    </location>
</feature>
<feature type="binding site" evidence="1">
    <location>
        <position position="206"/>
    </location>
    <ligand>
        <name>Fe cation</name>
        <dbReference type="ChEBI" id="CHEBI:24875"/>
    </ligand>
</feature>
<feature type="binding site" evidence="1">
    <location>
        <position position="287"/>
    </location>
    <ligand>
        <name>Fe cation</name>
        <dbReference type="ChEBI" id="CHEBI:24875"/>
    </ligand>
</feature>
<proteinExistence type="inferred from homology"/>
<gene>
    <name evidence="1" type="primary">hemH</name>
    <name type="ordered locus">NMB0718</name>
</gene>
<keyword id="KW-0963">Cytoplasm</keyword>
<keyword id="KW-0350">Heme biosynthesis</keyword>
<keyword id="KW-0408">Iron</keyword>
<keyword id="KW-0456">Lyase</keyword>
<keyword id="KW-0479">Metal-binding</keyword>
<keyword id="KW-0627">Porphyrin biosynthesis</keyword>
<keyword id="KW-1185">Reference proteome</keyword>
<sequence length="336" mass="38040">MLPFFPEPSLSYTQQNRTAVLLLNLGTPDAPTAQAVRPYLKSFLTDRRVVELPKWLWYPILHGLVLTLRPKKSAHAYEKIWFKEGSPLEVYTARQAAALAKRMPDLIVRHAMTYGNPSVADVLSELKAQGAGRLLVIPMYPQYAASSSGAAVDKVCEQLLLQRNQMSVRTVSRFYDDTGYIDAMKNHILRYWAEHGRGKKLMLSFHGVPQKHHDLGDPYPDECRHTAKLLAEALELTEDQYVVSFQSQFGRAKWVTPSTQDLFGKLPKQGVTELDVFCPGFLADCLETMEEIALMGREQFYEAGGKSYRYIPCLNDNPDWIDALVALAEENLGSWR</sequence>
<comment type="function">
    <text evidence="1">Catalyzes the ferrous insertion into protoporphyrin IX.</text>
</comment>
<comment type="catalytic activity">
    <reaction evidence="1">
        <text>heme b + 2 H(+) = protoporphyrin IX + Fe(2+)</text>
        <dbReference type="Rhea" id="RHEA:22584"/>
        <dbReference type="ChEBI" id="CHEBI:15378"/>
        <dbReference type="ChEBI" id="CHEBI:29033"/>
        <dbReference type="ChEBI" id="CHEBI:57306"/>
        <dbReference type="ChEBI" id="CHEBI:60344"/>
        <dbReference type="EC" id="4.98.1.1"/>
    </reaction>
</comment>
<comment type="pathway">
    <text evidence="1">Porphyrin-containing compound metabolism; protoheme biosynthesis; protoheme from protoporphyrin-IX: step 1/1.</text>
</comment>
<comment type="subcellular location">
    <subcellularLocation>
        <location evidence="1">Cytoplasm</location>
    </subcellularLocation>
</comment>
<comment type="similarity">
    <text evidence="1 2">Belongs to the ferrochelatase family.</text>
</comment>
<comment type="sequence caution" evidence="2">
    <conflict type="erroneous initiation">
        <sequence resource="EMBL-CDS" id="AAF41131"/>
    </conflict>
</comment>
<organism>
    <name type="scientific">Neisseria meningitidis serogroup B (strain ATCC BAA-335 / MC58)</name>
    <dbReference type="NCBI Taxonomy" id="122586"/>
    <lineage>
        <taxon>Bacteria</taxon>
        <taxon>Pseudomonadati</taxon>
        <taxon>Pseudomonadota</taxon>
        <taxon>Betaproteobacteria</taxon>
        <taxon>Neisseriales</taxon>
        <taxon>Neisseriaceae</taxon>
        <taxon>Neisseria</taxon>
    </lineage>
</organism>
<dbReference type="EC" id="4.98.1.1" evidence="1"/>
<dbReference type="EMBL" id="AE002098">
    <property type="protein sequence ID" value="AAF41131.1"/>
    <property type="status" value="ALT_INIT"/>
    <property type="molecule type" value="Genomic_DNA"/>
</dbReference>
<dbReference type="PIR" id="C81167">
    <property type="entry name" value="C81167"/>
</dbReference>
<dbReference type="RefSeq" id="NP_273760.1">
    <property type="nucleotide sequence ID" value="NC_003112.2"/>
</dbReference>
<dbReference type="SMR" id="Q9K097"/>
<dbReference type="FunCoup" id="Q9K097">
    <property type="interactions" value="406"/>
</dbReference>
<dbReference type="STRING" id="122586.NMB0718"/>
<dbReference type="PaxDb" id="122586-NMB0718"/>
<dbReference type="DNASU" id="902830"/>
<dbReference type="KEGG" id="nme:NMB0718"/>
<dbReference type="PATRIC" id="fig|122586.8.peg.916"/>
<dbReference type="HOGENOM" id="CLU_018884_0_0_4"/>
<dbReference type="InParanoid" id="Q9K097"/>
<dbReference type="OrthoDB" id="9809741at2"/>
<dbReference type="UniPathway" id="UPA00252">
    <property type="reaction ID" value="UER00325"/>
</dbReference>
<dbReference type="Proteomes" id="UP000000425">
    <property type="component" value="Chromosome"/>
</dbReference>
<dbReference type="GO" id="GO:0005737">
    <property type="term" value="C:cytoplasm"/>
    <property type="evidence" value="ECO:0007669"/>
    <property type="project" value="UniProtKB-SubCell"/>
</dbReference>
<dbReference type="GO" id="GO:0004325">
    <property type="term" value="F:ferrochelatase activity"/>
    <property type="evidence" value="ECO:0000318"/>
    <property type="project" value="GO_Central"/>
</dbReference>
<dbReference type="GO" id="GO:0046872">
    <property type="term" value="F:metal ion binding"/>
    <property type="evidence" value="ECO:0007669"/>
    <property type="project" value="UniProtKB-KW"/>
</dbReference>
<dbReference type="GO" id="GO:0006783">
    <property type="term" value="P:heme biosynthetic process"/>
    <property type="evidence" value="ECO:0000318"/>
    <property type="project" value="GO_Central"/>
</dbReference>
<dbReference type="CDD" id="cd00419">
    <property type="entry name" value="Ferrochelatase_C"/>
    <property type="match status" value="1"/>
</dbReference>
<dbReference type="CDD" id="cd03411">
    <property type="entry name" value="Ferrochelatase_N"/>
    <property type="match status" value="1"/>
</dbReference>
<dbReference type="FunFam" id="3.40.50.1400:FF:000002">
    <property type="entry name" value="Ferrochelatase"/>
    <property type="match status" value="1"/>
</dbReference>
<dbReference type="Gene3D" id="3.40.50.1400">
    <property type="match status" value="2"/>
</dbReference>
<dbReference type="HAMAP" id="MF_00323">
    <property type="entry name" value="Ferrochelatase"/>
    <property type="match status" value="1"/>
</dbReference>
<dbReference type="InterPro" id="IPR001015">
    <property type="entry name" value="Ferrochelatase"/>
</dbReference>
<dbReference type="InterPro" id="IPR019772">
    <property type="entry name" value="Ferrochelatase_AS"/>
</dbReference>
<dbReference type="InterPro" id="IPR033644">
    <property type="entry name" value="Ferrochelatase_C"/>
</dbReference>
<dbReference type="InterPro" id="IPR033659">
    <property type="entry name" value="Ferrochelatase_N"/>
</dbReference>
<dbReference type="NCBIfam" id="TIGR00109">
    <property type="entry name" value="hemH"/>
    <property type="match status" value="1"/>
</dbReference>
<dbReference type="PANTHER" id="PTHR11108">
    <property type="entry name" value="FERROCHELATASE"/>
    <property type="match status" value="1"/>
</dbReference>
<dbReference type="PANTHER" id="PTHR11108:SF1">
    <property type="entry name" value="FERROCHELATASE, MITOCHONDRIAL"/>
    <property type="match status" value="1"/>
</dbReference>
<dbReference type="Pfam" id="PF00762">
    <property type="entry name" value="Ferrochelatase"/>
    <property type="match status" value="1"/>
</dbReference>
<dbReference type="SUPFAM" id="SSF53800">
    <property type="entry name" value="Chelatase"/>
    <property type="match status" value="1"/>
</dbReference>
<dbReference type="PROSITE" id="PS00534">
    <property type="entry name" value="FERROCHELATASE"/>
    <property type="match status" value="1"/>
</dbReference>
<accession>Q9K097</accession>
<evidence type="ECO:0000255" key="1">
    <source>
        <dbReference type="HAMAP-Rule" id="MF_00323"/>
    </source>
</evidence>
<evidence type="ECO:0000305" key="2"/>
<protein>
    <recommendedName>
        <fullName evidence="1">Ferrochelatase</fullName>
        <ecNumber evidence="1">4.98.1.1</ecNumber>
    </recommendedName>
    <alternativeName>
        <fullName evidence="1">Heme synthase</fullName>
    </alternativeName>
    <alternativeName>
        <fullName evidence="1">Protoheme ferro-lyase</fullName>
    </alternativeName>
</protein>
<name>HEMH_NEIMB</name>
<reference key="1">
    <citation type="journal article" date="2000" name="Science">
        <title>Complete genome sequence of Neisseria meningitidis serogroup B strain MC58.</title>
        <authorList>
            <person name="Tettelin H."/>
            <person name="Saunders N.J."/>
            <person name="Heidelberg J.F."/>
            <person name="Jeffries A.C."/>
            <person name="Nelson K.E."/>
            <person name="Eisen J.A."/>
            <person name="Ketchum K.A."/>
            <person name="Hood D.W."/>
            <person name="Peden J.F."/>
            <person name="Dodson R.J."/>
            <person name="Nelson W.C."/>
            <person name="Gwinn M.L."/>
            <person name="DeBoy R.T."/>
            <person name="Peterson J.D."/>
            <person name="Hickey E.K."/>
            <person name="Haft D.H."/>
            <person name="Salzberg S.L."/>
            <person name="White O."/>
            <person name="Fleischmann R.D."/>
            <person name="Dougherty B.A."/>
            <person name="Mason T.M."/>
            <person name="Ciecko A."/>
            <person name="Parksey D.S."/>
            <person name="Blair E."/>
            <person name="Cittone H."/>
            <person name="Clark E.B."/>
            <person name="Cotton M.D."/>
            <person name="Utterback T.R."/>
            <person name="Khouri H.M."/>
            <person name="Qin H."/>
            <person name="Vamathevan J.J."/>
            <person name="Gill J."/>
            <person name="Scarlato V."/>
            <person name="Masignani V."/>
            <person name="Pizza M."/>
            <person name="Grandi G."/>
            <person name="Sun L."/>
            <person name="Smith H.O."/>
            <person name="Fraser C.M."/>
            <person name="Moxon E.R."/>
            <person name="Rappuoli R."/>
            <person name="Venter J.C."/>
        </authorList>
    </citation>
    <scope>NUCLEOTIDE SEQUENCE [LARGE SCALE GENOMIC DNA]</scope>
    <source>
        <strain>ATCC BAA-335 / MC58</strain>
    </source>
</reference>